<evidence type="ECO:0000255" key="1">
    <source>
        <dbReference type="HAMAP-Rule" id="MF_00358"/>
    </source>
</evidence>
<evidence type="ECO:0000256" key="2">
    <source>
        <dbReference type="SAM" id="MobiDB-lite"/>
    </source>
</evidence>
<evidence type="ECO:0000305" key="3"/>
<feature type="chain" id="PRO_0000266704" description="Small ribosomal subunit protein bS21B">
    <location>
        <begin position="1"/>
        <end position="75"/>
    </location>
</feature>
<feature type="region of interest" description="Disordered" evidence="2">
    <location>
        <begin position="33"/>
        <end position="75"/>
    </location>
</feature>
<feature type="compositionally biased region" description="Basic and acidic residues" evidence="2">
    <location>
        <begin position="33"/>
        <end position="52"/>
    </location>
</feature>
<proteinExistence type="inferred from homology"/>
<gene>
    <name evidence="1" type="primary">rpsU2</name>
    <name type="ordered locus">Meso_3994</name>
</gene>
<reference key="1">
    <citation type="submission" date="2006-06" db="EMBL/GenBank/DDBJ databases">
        <title>Complete sequence of chromosome of Mesorhizobium sp. BNC1.</title>
        <authorList>
            <consortium name="US DOE Joint Genome Institute"/>
            <person name="Copeland A."/>
            <person name="Lucas S."/>
            <person name="Lapidus A."/>
            <person name="Barry K."/>
            <person name="Detter J.C."/>
            <person name="Glavina del Rio T."/>
            <person name="Hammon N."/>
            <person name="Israni S."/>
            <person name="Dalin E."/>
            <person name="Tice H."/>
            <person name="Pitluck S."/>
            <person name="Chertkov O."/>
            <person name="Brettin T."/>
            <person name="Bruce D."/>
            <person name="Han C."/>
            <person name="Tapia R."/>
            <person name="Gilna P."/>
            <person name="Schmutz J."/>
            <person name="Larimer F."/>
            <person name="Land M."/>
            <person name="Hauser L."/>
            <person name="Kyrpides N."/>
            <person name="Mikhailova N."/>
            <person name="Richardson P."/>
        </authorList>
    </citation>
    <scope>NUCLEOTIDE SEQUENCE [LARGE SCALE GENOMIC DNA]</scope>
    <source>
        <strain>BNC1</strain>
    </source>
</reference>
<organism>
    <name type="scientific">Chelativorans sp. (strain BNC1)</name>
    <dbReference type="NCBI Taxonomy" id="266779"/>
    <lineage>
        <taxon>Bacteria</taxon>
        <taxon>Pseudomonadati</taxon>
        <taxon>Pseudomonadota</taxon>
        <taxon>Alphaproteobacteria</taxon>
        <taxon>Hyphomicrobiales</taxon>
        <taxon>Phyllobacteriaceae</taxon>
        <taxon>Chelativorans</taxon>
    </lineage>
</organism>
<protein>
    <recommendedName>
        <fullName evidence="1">Small ribosomal subunit protein bS21B</fullName>
    </recommendedName>
    <alternativeName>
        <fullName evidence="3">30S ribosomal protein S21 2</fullName>
    </alternativeName>
</protein>
<dbReference type="EMBL" id="CP000390">
    <property type="protein sequence ID" value="ABG65361.1"/>
    <property type="molecule type" value="Genomic_DNA"/>
</dbReference>
<dbReference type="SMR" id="Q11B64"/>
<dbReference type="STRING" id="266779.Meso_3994"/>
<dbReference type="KEGG" id="mes:Meso_3994"/>
<dbReference type="eggNOG" id="COG0828">
    <property type="taxonomic scope" value="Bacteria"/>
</dbReference>
<dbReference type="HOGENOM" id="CLU_159258_0_1_5"/>
<dbReference type="OrthoDB" id="9811907at2"/>
<dbReference type="GO" id="GO:1990904">
    <property type="term" value="C:ribonucleoprotein complex"/>
    <property type="evidence" value="ECO:0007669"/>
    <property type="project" value="UniProtKB-KW"/>
</dbReference>
<dbReference type="GO" id="GO:0005840">
    <property type="term" value="C:ribosome"/>
    <property type="evidence" value="ECO:0007669"/>
    <property type="project" value="UniProtKB-KW"/>
</dbReference>
<dbReference type="GO" id="GO:0003735">
    <property type="term" value="F:structural constituent of ribosome"/>
    <property type="evidence" value="ECO:0007669"/>
    <property type="project" value="InterPro"/>
</dbReference>
<dbReference type="GO" id="GO:0006412">
    <property type="term" value="P:translation"/>
    <property type="evidence" value="ECO:0007669"/>
    <property type="project" value="UniProtKB-UniRule"/>
</dbReference>
<dbReference type="Gene3D" id="1.20.5.1150">
    <property type="entry name" value="Ribosomal protein S8"/>
    <property type="match status" value="1"/>
</dbReference>
<dbReference type="HAMAP" id="MF_00358">
    <property type="entry name" value="Ribosomal_bS21"/>
    <property type="match status" value="1"/>
</dbReference>
<dbReference type="InterPro" id="IPR001911">
    <property type="entry name" value="Ribosomal_bS21"/>
</dbReference>
<dbReference type="InterPro" id="IPR038380">
    <property type="entry name" value="Ribosomal_bS21_sf"/>
</dbReference>
<dbReference type="NCBIfam" id="TIGR00030">
    <property type="entry name" value="S21p"/>
    <property type="match status" value="1"/>
</dbReference>
<dbReference type="PANTHER" id="PTHR21109">
    <property type="entry name" value="MITOCHONDRIAL 28S RIBOSOMAL PROTEIN S21"/>
    <property type="match status" value="1"/>
</dbReference>
<dbReference type="PANTHER" id="PTHR21109:SF0">
    <property type="entry name" value="SMALL RIBOSOMAL SUBUNIT PROTEIN BS21M"/>
    <property type="match status" value="1"/>
</dbReference>
<dbReference type="Pfam" id="PF01165">
    <property type="entry name" value="Ribosomal_S21"/>
    <property type="match status" value="1"/>
</dbReference>
<dbReference type="PRINTS" id="PR00976">
    <property type="entry name" value="RIBOSOMALS21"/>
</dbReference>
<comment type="similarity">
    <text evidence="1">Belongs to the bacterial ribosomal protein bS21 family.</text>
</comment>
<accession>Q11B64</accession>
<keyword id="KW-0687">Ribonucleoprotein</keyword>
<keyword id="KW-0689">Ribosomal protein</keyword>
<sequence>MQVVVRDNNVDQALRVLKKKMQREGIFREMKARRSYEKPSERRAREKAEAVRRARKLARKQAQREGLLPGKKRAA</sequence>
<name>RS212_CHESB</name>